<dbReference type="EMBL" id="AL831939">
    <property type="protein sequence ID" value="CAD38591.1"/>
    <property type="molecule type" value="mRNA"/>
</dbReference>
<dbReference type="EMBL" id="CR749433">
    <property type="protein sequence ID" value="CAH18271.1"/>
    <property type="molecule type" value="mRNA"/>
</dbReference>
<dbReference type="EMBL" id="AL355476">
    <property type="status" value="NOT_ANNOTATED_CDS"/>
    <property type="molecule type" value="Genomic_DNA"/>
</dbReference>
<dbReference type="EMBL" id="CH471107">
    <property type="protein sequence ID" value="EAX11853.1"/>
    <property type="molecule type" value="Genomic_DNA"/>
</dbReference>
<dbReference type="EMBL" id="CH471107">
    <property type="protein sequence ID" value="EAX11854.1"/>
    <property type="molecule type" value="Genomic_DNA"/>
</dbReference>
<dbReference type="EMBL" id="CH471107">
    <property type="protein sequence ID" value="EAX11855.1"/>
    <property type="molecule type" value="Genomic_DNA"/>
</dbReference>
<dbReference type="EMBL" id="CH471107">
    <property type="protein sequence ID" value="EAX11856.1"/>
    <property type="molecule type" value="Genomic_DNA"/>
</dbReference>
<dbReference type="EMBL" id="CH471107">
    <property type="protein sequence ID" value="EAX11857.1"/>
    <property type="molecule type" value="Genomic_DNA"/>
</dbReference>
<dbReference type="EMBL" id="BC001765">
    <property type="protein sequence ID" value="AAH01765.2"/>
    <property type="molecule type" value="mRNA"/>
</dbReference>
<dbReference type="EMBL" id="Z75331">
    <property type="protein sequence ID" value="CAA99732.1"/>
    <property type="status" value="ALT_INIT"/>
    <property type="molecule type" value="mRNA"/>
</dbReference>
<dbReference type="CCDS" id="CCDS14607.1">
    <molecule id="Q8N3U4-1"/>
</dbReference>
<dbReference type="CCDS" id="CCDS43990.1">
    <molecule id="Q8N3U4-2"/>
</dbReference>
<dbReference type="RefSeq" id="NP_001036214.1">
    <molecule id="Q8N3U4-2"/>
    <property type="nucleotide sequence ID" value="NM_001042749.2"/>
</dbReference>
<dbReference type="RefSeq" id="NP_001036215.1">
    <molecule id="Q8N3U4-2"/>
    <property type="nucleotide sequence ID" value="NM_001042750.2"/>
</dbReference>
<dbReference type="RefSeq" id="NP_001036216.1">
    <molecule id="Q8N3U4-1"/>
    <property type="nucleotide sequence ID" value="NM_001042751.2"/>
</dbReference>
<dbReference type="RefSeq" id="NP_001269347.1">
    <molecule id="Q8N3U4-1"/>
    <property type="nucleotide sequence ID" value="NM_001282418.2"/>
</dbReference>
<dbReference type="RefSeq" id="NP_001362295.1">
    <molecule id="Q8N3U4-2"/>
    <property type="nucleotide sequence ID" value="NM_001375366.1"/>
</dbReference>
<dbReference type="RefSeq" id="NP_001362296.1">
    <molecule id="Q8N3U4-2"/>
    <property type="nucleotide sequence ID" value="NM_001375367.1"/>
</dbReference>
<dbReference type="RefSeq" id="NP_001362297.1">
    <molecule id="Q8N3U4-2"/>
    <property type="nucleotide sequence ID" value="NM_001375368.1"/>
</dbReference>
<dbReference type="RefSeq" id="NP_001362298.1">
    <molecule id="Q8N3U4-2"/>
    <property type="nucleotide sequence ID" value="NM_001375369.1"/>
</dbReference>
<dbReference type="RefSeq" id="NP_001362299.1">
    <molecule id="Q8N3U4-2"/>
    <property type="nucleotide sequence ID" value="NM_001375370.1"/>
</dbReference>
<dbReference type="RefSeq" id="NP_001362300.1">
    <molecule id="Q8N3U4-2"/>
    <property type="nucleotide sequence ID" value="NM_001375371.1"/>
</dbReference>
<dbReference type="RefSeq" id="NP_001362301.1">
    <molecule id="Q8N3U4-2"/>
    <property type="nucleotide sequence ID" value="NM_001375372.1"/>
</dbReference>
<dbReference type="RefSeq" id="NP_001362302.1">
    <molecule id="Q8N3U4-1"/>
    <property type="nucleotide sequence ID" value="NM_001375373.1"/>
</dbReference>
<dbReference type="RefSeq" id="NP_001362303.1">
    <molecule id="Q8N3U4-1"/>
    <property type="nucleotide sequence ID" value="NM_001375374.1"/>
</dbReference>
<dbReference type="RefSeq" id="NP_001362304.1">
    <molecule id="Q8N3U4-1"/>
    <property type="nucleotide sequence ID" value="NM_001375375.1"/>
</dbReference>
<dbReference type="RefSeq" id="NP_001362305.1">
    <molecule id="Q8N3U4-1"/>
    <property type="nucleotide sequence ID" value="NM_001375376.1"/>
</dbReference>
<dbReference type="RefSeq" id="NP_001362306.1">
    <molecule id="Q8N3U4-1"/>
    <property type="nucleotide sequence ID" value="NM_001375377.1"/>
</dbReference>
<dbReference type="RefSeq" id="NP_006594.3">
    <molecule id="Q8N3U4-1"/>
    <property type="nucleotide sequence ID" value="NM_006603.4"/>
</dbReference>
<dbReference type="RefSeq" id="XP_005262414.1">
    <property type="nucleotide sequence ID" value="XM_005262357.2"/>
</dbReference>
<dbReference type="RefSeq" id="XP_005262415.1">
    <property type="nucleotide sequence ID" value="XM_005262358.2"/>
</dbReference>
<dbReference type="RefSeq" id="XP_005262416.1">
    <property type="nucleotide sequence ID" value="XM_005262359.3"/>
</dbReference>
<dbReference type="RefSeq" id="XP_005262417.1">
    <property type="nucleotide sequence ID" value="XM_005262360.2"/>
</dbReference>
<dbReference type="RefSeq" id="XP_005262418.1">
    <property type="nucleotide sequence ID" value="XM_005262361.2"/>
</dbReference>
<dbReference type="RefSeq" id="XP_006724790.1">
    <molecule id="Q8N3U4-2"/>
    <property type="nucleotide sequence ID" value="XM_006724727.2"/>
</dbReference>
<dbReference type="RefSeq" id="XP_011529555.1">
    <property type="nucleotide sequence ID" value="XM_011531253.2"/>
</dbReference>
<dbReference type="RefSeq" id="XP_016884721.1">
    <property type="nucleotide sequence ID" value="XM_017029232.1"/>
</dbReference>
<dbReference type="RefSeq" id="XP_016884722.1">
    <property type="nucleotide sequence ID" value="XM_017029233.1"/>
</dbReference>
<dbReference type="RefSeq" id="XP_016884723.1">
    <property type="nucleotide sequence ID" value="XM_017029234.1"/>
</dbReference>
<dbReference type="RefSeq" id="XP_024308096.1">
    <molecule id="Q8N3U4-1"/>
    <property type="nucleotide sequence ID" value="XM_024452328.2"/>
</dbReference>
<dbReference type="RefSeq" id="XP_047297731.1">
    <molecule id="Q8N3U4-2"/>
    <property type="nucleotide sequence ID" value="XM_047441775.1"/>
</dbReference>
<dbReference type="RefSeq" id="XP_047297732.1">
    <molecule id="Q8N3U4-2"/>
    <property type="nucleotide sequence ID" value="XM_047441776.1"/>
</dbReference>
<dbReference type="RefSeq" id="XP_047297733.1">
    <molecule id="Q8N3U4-2"/>
    <property type="nucleotide sequence ID" value="XM_047441777.1"/>
</dbReference>
<dbReference type="RefSeq" id="XP_047297734.1">
    <molecule id="Q8N3U4-2"/>
    <property type="nucleotide sequence ID" value="XM_047441778.1"/>
</dbReference>
<dbReference type="RefSeq" id="XP_047297735.1">
    <molecule id="Q8N3U4-2"/>
    <property type="nucleotide sequence ID" value="XM_047441779.1"/>
</dbReference>
<dbReference type="RefSeq" id="XP_047297736.1">
    <molecule id="Q8N3U4-1"/>
    <property type="nucleotide sequence ID" value="XM_047441780.1"/>
</dbReference>
<dbReference type="RefSeq" id="XP_047297737.1">
    <molecule id="Q8N3U4-1"/>
    <property type="nucleotide sequence ID" value="XM_047441781.1"/>
</dbReference>
<dbReference type="RefSeq" id="XP_047297738.1">
    <molecule id="Q8N3U4-1"/>
    <property type="nucleotide sequence ID" value="XM_047441782.1"/>
</dbReference>
<dbReference type="RefSeq" id="XP_047297739.1">
    <molecule id="Q8N3U4-1"/>
    <property type="nucleotide sequence ID" value="XM_047441783.1"/>
</dbReference>
<dbReference type="RefSeq" id="XP_047297740.1">
    <molecule id="Q8N3U4-1"/>
    <property type="nucleotide sequence ID" value="XM_047441784.1"/>
</dbReference>
<dbReference type="RefSeq" id="XP_047297741.1">
    <molecule id="Q8N3U4-1"/>
    <property type="nucleotide sequence ID" value="XM_047441785.1"/>
</dbReference>
<dbReference type="RefSeq" id="XP_047297742.1">
    <molecule id="Q8N3U4-1"/>
    <property type="nucleotide sequence ID" value="XM_047441786.1"/>
</dbReference>
<dbReference type="RefSeq" id="XP_054182354.1">
    <molecule id="Q8N3U4-2"/>
    <property type="nucleotide sequence ID" value="XM_054326379.1"/>
</dbReference>
<dbReference type="RefSeq" id="XP_054182355.1">
    <molecule id="Q8N3U4-2"/>
    <property type="nucleotide sequence ID" value="XM_054326380.1"/>
</dbReference>
<dbReference type="RefSeq" id="XP_054182356.1">
    <molecule id="Q8N3U4-2"/>
    <property type="nucleotide sequence ID" value="XM_054326381.1"/>
</dbReference>
<dbReference type="RefSeq" id="XP_054182357.1">
    <molecule id="Q8N3U4-2"/>
    <property type="nucleotide sequence ID" value="XM_054326382.1"/>
</dbReference>
<dbReference type="RefSeq" id="XP_054182358.1">
    <molecule id="Q8N3U4-2"/>
    <property type="nucleotide sequence ID" value="XM_054326383.1"/>
</dbReference>
<dbReference type="RefSeq" id="XP_054182359.1">
    <molecule id="Q8N3U4-2"/>
    <property type="nucleotide sequence ID" value="XM_054326384.1"/>
</dbReference>
<dbReference type="RefSeq" id="XP_054182360.1">
    <molecule id="Q8N3U4-1"/>
    <property type="nucleotide sequence ID" value="XM_054326385.1"/>
</dbReference>
<dbReference type="RefSeq" id="XP_054182361.1">
    <molecule id="Q8N3U4-1"/>
    <property type="nucleotide sequence ID" value="XM_054326386.1"/>
</dbReference>
<dbReference type="RefSeq" id="XP_054182362.1">
    <molecule id="Q8N3U4-1"/>
    <property type="nucleotide sequence ID" value="XM_054326387.1"/>
</dbReference>
<dbReference type="RefSeq" id="XP_054182363.1">
    <molecule id="Q8N3U4-1"/>
    <property type="nucleotide sequence ID" value="XM_054326388.1"/>
</dbReference>
<dbReference type="RefSeq" id="XP_054182364.1">
    <molecule id="Q8N3U4-1"/>
    <property type="nucleotide sequence ID" value="XM_054326389.1"/>
</dbReference>
<dbReference type="RefSeq" id="XP_054182365.1">
    <molecule id="Q8N3U4-1"/>
    <property type="nucleotide sequence ID" value="XM_054326390.1"/>
</dbReference>
<dbReference type="RefSeq" id="XP_054182366.1">
    <molecule id="Q8N3U4-1"/>
    <property type="nucleotide sequence ID" value="XM_054326391.1"/>
</dbReference>
<dbReference type="RefSeq" id="XP_054182367.1">
    <molecule id="Q8N3U4-1"/>
    <property type="nucleotide sequence ID" value="XM_054326392.1"/>
</dbReference>
<dbReference type="PDB" id="4PJU">
    <property type="method" value="X-ray"/>
    <property type="resolution" value="3.05 A"/>
    <property type="chains" value="A=80-1060"/>
</dbReference>
<dbReference type="PDB" id="4PJW">
    <property type="method" value="X-ray"/>
    <property type="resolution" value="2.85 A"/>
    <property type="chains" value="A=80-1060"/>
</dbReference>
<dbReference type="PDB" id="4PK7">
    <property type="method" value="X-ray"/>
    <property type="resolution" value="2.95 A"/>
    <property type="chains" value="A=80-1060"/>
</dbReference>
<dbReference type="PDB" id="6QNX">
    <property type="method" value="X-ray"/>
    <property type="resolution" value="2.70 A"/>
    <property type="chains" value="A=1-1231"/>
</dbReference>
<dbReference type="PDB" id="7ZJS">
    <property type="method" value="X-ray"/>
    <property type="resolution" value="3.24 A"/>
    <property type="chains" value="A/C=1-1231"/>
</dbReference>
<dbReference type="PDB" id="8K4D">
    <property type="method" value="X-ray"/>
    <property type="resolution" value="3.52 A"/>
    <property type="chains" value="A=81-1060"/>
</dbReference>
<dbReference type="PDBsum" id="4PJU"/>
<dbReference type="PDBsum" id="4PJW"/>
<dbReference type="PDBsum" id="4PK7"/>
<dbReference type="PDBsum" id="6QNX"/>
<dbReference type="PDBsum" id="7ZJS"/>
<dbReference type="PDBsum" id="8K4D"/>
<dbReference type="SMR" id="Q8N3U4"/>
<dbReference type="BioGRID" id="115958">
    <property type="interactions" value="236"/>
</dbReference>
<dbReference type="ComplexPortal" id="CPX-5991">
    <property type="entry name" value="Nuclear mitotic cohesin complex, STAG2 variant"/>
</dbReference>
<dbReference type="CORUM" id="Q8N3U4"/>
<dbReference type="DIP" id="DIP-35418N"/>
<dbReference type="FunCoup" id="Q8N3U4">
    <property type="interactions" value="4336"/>
</dbReference>
<dbReference type="IntAct" id="Q8N3U4">
    <property type="interactions" value="85"/>
</dbReference>
<dbReference type="MINT" id="Q8N3U4"/>
<dbReference type="STRING" id="9606.ENSP00000218089"/>
<dbReference type="GlyGen" id="Q8N3U4">
    <property type="glycosylation" value="1 site, 1 O-linked glycan (1 site)"/>
</dbReference>
<dbReference type="iPTMnet" id="Q8N3U4"/>
<dbReference type="MetOSite" id="Q8N3U4"/>
<dbReference type="PhosphoSitePlus" id="Q8N3U4"/>
<dbReference type="SwissPalm" id="Q8N3U4"/>
<dbReference type="BioMuta" id="STAG2"/>
<dbReference type="DMDM" id="73621291"/>
<dbReference type="jPOST" id="Q8N3U4"/>
<dbReference type="MassIVE" id="Q8N3U4"/>
<dbReference type="PaxDb" id="9606-ENSP00000218089"/>
<dbReference type="PeptideAtlas" id="Q8N3U4"/>
<dbReference type="ProteomicsDB" id="71836">
    <molecule id="Q8N3U4-1"/>
</dbReference>
<dbReference type="ProteomicsDB" id="71837">
    <molecule id="Q8N3U4-2"/>
</dbReference>
<dbReference type="Pumba" id="Q8N3U4"/>
<dbReference type="Antibodypedia" id="500">
    <property type="antibodies" value="319 antibodies from 36 providers"/>
</dbReference>
<dbReference type="DNASU" id="10735"/>
<dbReference type="Ensembl" id="ENST00000218089.13">
    <molecule id="Q8N3U4-2"/>
    <property type="protein sequence ID" value="ENSP00000218089.9"/>
    <property type="gene ID" value="ENSG00000101972.20"/>
</dbReference>
<dbReference type="Ensembl" id="ENST00000371144.7">
    <molecule id="Q8N3U4-1"/>
    <property type="protein sequence ID" value="ENSP00000360186.3"/>
    <property type="gene ID" value="ENSG00000101972.20"/>
</dbReference>
<dbReference type="Ensembl" id="ENST00000371145.8">
    <molecule id="Q8N3U4-2"/>
    <property type="protein sequence ID" value="ENSP00000360187.4"/>
    <property type="gene ID" value="ENSG00000101972.20"/>
</dbReference>
<dbReference type="Ensembl" id="ENST00000371157.7">
    <molecule id="Q8N3U4-1"/>
    <property type="protein sequence ID" value="ENSP00000360199.3"/>
    <property type="gene ID" value="ENSG00000101972.20"/>
</dbReference>
<dbReference type="Ensembl" id="ENST00000371160.5">
    <molecule id="Q8N3U4-1"/>
    <property type="protein sequence ID" value="ENSP00000360202.1"/>
    <property type="gene ID" value="ENSG00000101972.20"/>
</dbReference>
<dbReference type="Ensembl" id="ENST00000455404.6">
    <molecule id="Q8N3U4-1"/>
    <property type="protein sequence ID" value="ENSP00000397265.2"/>
    <property type="gene ID" value="ENSG00000101972.20"/>
</dbReference>
<dbReference type="Ensembl" id="ENST00000687852.1">
    <molecule id="Q8N3U4-2"/>
    <property type="protein sequence ID" value="ENSP00000509048.1"/>
    <property type="gene ID" value="ENSG00000101972.20"/>
</dbReference>
<dbReference type="GeneID" id="10735"/>
<dbReference type="KEGG" id="hsa:10735"/>
<dbReference type="MANE-Select" id="ENST00000371145.8">
    <molecule id="Q8N3U4-2"/>
    <property type="protein sequence ID" value="ENSP00000360187.4"/>
    <property type="RefSeq nucleotide sequence ID" value="NM_001042750.2"/>
    <property type="RefSeq protein sequence ID" value="NP_001036215.1"/>
</dbReference>
<dbReference type="UCSC" id="uc004eua.5">
    <molecule id="Q8N3U4-1"/>
    <property type="organism name" value="human"/>
</dbReference>
<dbReference type="AGR" id="HGNC:11355"/>
<dbReference type="CTD" id="10735"/>
<dbReference type="DisGeNET" id="10735"/>
<dbReference type="GeneCards" id="STAG2"/>
<dbReference type="HGNC" id="HGNC:11355">
    <property type="gene designation" value="STAG2"/>
</dbReference>
<dbReference type="HPA" id="ENSG00000101972">
    <property type="expression patterns" value="Low tissue specificity"/>
</dbReference>
<dbReference type="MalaCards" id="STAG2"/>
<dbReference type="MIM" id="300826">
    <property type="type" value="gene"/>
</dbReference>
<dbReference type="MIM" id="301022">
    <property type="type" value="phenotype"/>
</dbReference>
<dbReference type="MIM" id="301043">
    <property type="type" value="phenotype"/>
</dbReference>
<dbReference type="neXtProt" id="NX_Q8N3U4"/>
<dbReference type="OpenTargets" id="ENSG00000101972"/>
<dbReference type="Orphanet" id="93925">
    <property type="disease" value="Alobar holoprosencephaly"/>
</dbReference>
<dbReference type="Orphanet" id="220386">
    <property type="disease" value="Semilobar holoprosencephaly"/>
</dbReference>
<dbReference type="Orphanet" id="521258">
    <property type="disease" value="Xq25 microduplication syndrome"/>
</dbReference>
<dbReference type="PharmGKB" id="PA36177"/>
<dbReference type="VEuPathDB" id="HostDB:ENSG00000101972"/>
<dbReference type="eggNOG" id="KOG2011">
    <property type="taxonomic scope" value="Eukaryota"/>
</dbReference>
<dbReference type="GeneTree" id="ENSGT00950000182972"/>
<dbReference type="HOGENOM" id="CLU_005067_1_0_1"/>
<dbReference type="InParanoid" id="Q8N3U4"/>
<dbReference type="OMA" id="FGWMLND"/>
<dbReference type="OrthoDB" id="498590at2759"/>
<dbReference type="PAN-GO" id="Q8N3U4">
    <property type="GO annotations" value="5 GO annotations based on evolutionary models"/>
</dbReference>
<dbReference type="PhylomeDB" id="Q8N3U4"/>
<dbReference type="TreeFam" id="TF314604"/>
<dbReference type="PathwayCommons" id="Q8N3U4"/>
<dbReference type="Reactome" id="R-HSA-1221632">
    <property type="pathway name" value="Meiotic synapsis"/>
</dbReference>
<dbReference type="Reactome" id="R-HSA-2467813">
    <property type="pathway name" value="Separation of Sister Chromatids"/>
</dbReference>
<dbReference type="Reactome" id="R-HSA-2468052">
    <property type="pathway name" value="Establishment of Sister Chromatid Cohesion"/>
</dbReference>
<dbReference type="Reactome" id="R-HSA-2470946">
    <property type="pathway name" value="Cohesin Loading onto Chromatin"/>
</dbReference>
<dbReference type="Reactome" id="R-HSA-2500257">
    <property type="pathway name" value="Resolution of Sister Chromatid Cohesion"/>
</dbReference>
<dbReference type="Reactome" id="R-HSA-3108214">
    <property type="pathway name" value="SUMOylation of DNA damage response and repair proteins"/>
</dbReference>
<dbReference type="Reactome" id="R-HSA-9018519">
    <property type="pathway name" value="Estrogen-dependent gene expression"/>
</dbReference>
<dbReference type="SignaLink" id="Q8N3U4"/>
<dbReference type="SIGNOR" id="Q8N3U4"/>
<dbReference type="BioGRID-ORCS" id="10735">
    <property type="hits" value="148 hits in 808 CRISPR screens"/>
</dbReference>
<dbReference type="CD-CODE" id="91857CE7">
    <property type="entry name" value="Nucleolus"/>
</dbReference>
<dbReference type="ChiTaRS" id="STAG2">
    <property type="organism name" value="human"/>
</dbReference>
<dbReference type="EvolutionaryTrace" id="Q8N3U4"/>
<dbReference type="GeneWiki" id="STAG2"/>
<dbReference type="GenomeRNAi" id="10735"/>
<dbReference type="Pharos" id="Q8N3U4">
    <property type="development level" value="Tbio"/>
</dbReference>
<dbReference type="PRO" id="PR:Q8N3U4"/>
<dbReference type="Proteomes" id="UP000005640">
    <property type="component" value="Chromosome X"/>
</dbReference>
<dbReference type="RNAct" id="Q8N3U4">
    <property type="molecule type" value="protein"/>
</dbReference>
<dbReference type="Bgee" id="ENSG00000101972">
    <property type="expression patterns" value="Expressed in mucosa of paranasal sinus and 217 other cell types or tissues"/>
</dbReference>
<dbReference type="ExpressionAtlas" id="Q8N3U4">
    <property type="expression patterns" value="baseline and differential"/>
</dbReference>
<dbReference type="GO" id="GO:0000785">
    <property type="term" value="C:chromatin"/>
    <property type="evidence" value="ECO:0000314"/>
    <property type="project" value="UniProtKB"/>
</dbReference>
<dbReference type="GO" id="GO:0005694">
    <property type="term" value="C:chromosome"/>
    <property type="evidence" value="ECO:0000304"/>
    <property type="project" value="Reactome"/>
</dbReference>
<dbReference type="GO" id="GO:0000775">
    <property type="term" value="C:chromosome, centromeric region"/>
    <property type="evidence" value="ECO:0000304"/>
    <property type="project" value="Reactome"/>
</dbReference>
<dbReference type="GO" id="GO:0008278">
    <property type="term" value="C:cohesin complex"/>
    <property type="evidence" value="ECO:0000314"/>
    <property type="project" value="UniProtKB"/>
</dbReference>
<dbReference type="GO" id="GO:0005829">
    <property type="term" value="C:cytosol"/>
    <property type="evidence" value="ECO:0000304"/>
    <property type="project" value="Reactome"/>
</dbReference>
<dbReference type="GO" id="GO:0001650">
    <property type="term" value="C:fibrillar center"/>
    <property type="evidence" value="ECO:0000314"/>
    <property type="project" value="HPA"/>
</dbReference>
<dbReference type="GO" id="GO:0016020">
    <property type="term" value="C:membrane"/>
    <property type="evidence" value="ECO:0007005"/>
    <property type="project" value="UniProtKB"/>
</dbReference>
<dbReference type="GO" id="GO:0030892">
    <property type="term" value="C:mitotic cohesin complex"/>
    <property type="evidence" value="ECO:0000353"/>
    <property type="project" value="ComplexPortal"/>
</dbReference>
<dbReference type="GO" id="GO:0097431">
    <property type="term" value="C:mitotic spindle pole"/>
    <property type="evidence" value="ECO:0000314"/>
    <property type="project" value="UniProtKB"/>
</dbReference>
<dbReference type="GO" id="GO:0016363">
    <property type="term" value="C:nuclear matrix"/>
    <property type="evidence" value="ECO:0000314"/>
    <property type="project" value="UniProtKB"/>
</dbReference>
<dbReference type="GO" id="GO:0005730">
    <property type="term" value="C:nucleolus"/>
    <property type="evidence" value="ECO:0000314"/>
    <property type="project" value="HPA"/>
</dbReference>
<dbReference type="GO" id="GO:0005654">
    <property type="term" value="C:nucleoplasm"/>
    <property type="evidence" value="ECO:0000314"/>
    <property type="project" value="HPA"/>
</dbReference>
<dbReference type="GO" id="GO:0005634">
    <property type="term" value="C:nucleus"/>
    <property type="evidence" value="ECO:0000318"/>
    <property type="project" value="GO_Central"/>
</dbReference>
<dbReference type="GO" id="GO:0003682">
    <property type="term" value="F:chromatin binding"/>
    <property type="evidence" value="ECO:0000318"/>
    <property type="project" value="GO_Central"/>
</dbReference>
<dbReference type="GO" id="GO:0051301">
    <property type="term" value="P:cell division"/>
    <property type="evidence" value="ECO:0007669"/>
    <property type="project" value="UniProtKB-KW"/>
</dbReference>
<dbReference type="GO" id="GO:0034087">
    <property type="term" value="P:establishment of mitotic sister chromatid cohesion"/>
    <property type="evidence" value="ECO:0000303"/>
    <property type="project" value="ComplexPortal"/>
</dbReference>
<dbReference type="GO" id="GO:0051321">
    <property type="term" value="P:meiotic cell cycle"/>
    <property type="evidence" value="ECO:0007669"/>
    <property type="project" value="UniProtKB-KW"/>
</dbReference>
<dbReference type="GO" id="GO:0090307">
    <property type="term" value="P:mitotic spindle assembly"/>
    <property type="evidence" value="ECO:0000315"/>
    <property type="project" value="UniProtKB"/>
</dbReference>
<dbReference type="GO" id="GO:0007062">
    <property type="term" value="P:sister chromatid cohesion"/>
    <property type="evidence" value="ECO:0000315"/>
    <property type="project" value="UniProtKB"/>
</dbReference>
<dbReference type="IDEAL" id="IID00674"/>
<dbReference type="InterPro" id="IPR016024">
    <property type="entry name" value="ARM-type_fold"/>
</dbReference>
<dbReference type="InterPro" id="IPR039662">
    <property type="entry name" value="Cohesin_Scc3/SA"/>
</dbReference>
<dbReference type="InterPro" id="IPR056396">
    <property type="entry name" value="HEAT_SCC3-SA"/>
</dbReference>
<dbReference type="InterPro" id="IPR020839">
    <property type="entry name" value="SCD"/>
</dbReference>
<dbReference type="InterPro" id="IPR013721">
    <property type="entry name" value="STAG"/>
</dbReference>
<dbReference type="PANTHER" id="PTHR11199:SF3">
    <property type="entry name" value="COHESIN SUBUNIT SA-2"/>
    <property type="match status" value="1"/>
</dbReference>
<dbReference type="PANTHER" id="PTHR11199">
    <property type="entry name" value="STROMAL ANTIGEN"/>
    <property type="match status" value="1"/>
</dbReference>
<dbReference type="Pfam" id="PF24571">
    <property type="entry name" value="HEAT_SCC3-SA"/>
    <property type="match status" value="1"/>
</dbReference>
<dbReference type="Pfam" id="PF21581">
    <property type="entry name" value="SCD"/>
    <property type="match status" value="1"/>
</dbReference>
<dbReference type="Pfam" id="PF08514">
    <property type="entry name" value="STAG"/>
    <property type="match status" value="1"/>
</dbReference>
<dbReference type="SUPFAM" id="SSF48371">
    <property type="entry name" value="ARM repeat"/>
    <property type="match status" value="1"/>
</dbReference>
<dbReference type="PROSITE" id="PS51425">
    <property type="entry name" value="SCD"/>
    <property type="match status" value="1"/>
</dbReference>
<proteinExistence type="evidence at protein level"/>
<reference key="1">
    <citation type="journal article" date="2007" name="BMC Genomics">
        <title>The full-ORF clone resource of the German cDNA consortium.</title>
        <authorList>
            <person name="Bechtel S."/>
            <person name="Rosenfelder H."/>
            <person name="Duda A."/>
            <person name="Schmidt C.P."/>
            <person name="Ernst U."/>
            <person name="Wellenreuther R."/>
            <person name="Mehrle A."/>
            <person name="Schuster C."/>
            <person name="Bahr A."/>
            <person name="Bloecker H."/>
            <person name="Heubner D."/>
            <person name="Hoerlein A."/>
            <person name="Michel G."/>
            <person name="Wedler H."/>
            <person name="Koehrer K."/>
            <person name="Ottenwaelder B."/>
            <person name="Poustka A."/>
            <person name="Wiemann S."/>
            <person name="Schupp I."/>
        </authorList>
    </citation>
    <scope>NUCLEOTIDE SEQUENCE [LARGE SCALE MRNA] (ISOFORMS 1 AND 2)</scope>
    <source>
        <tissue>Retina</tissue>
        <tissue>Spinal cord</tissue>
    </source>
</reference>
<reference key="2">
    <citation type="journal article" date="2005" name="Nature">
        <title>The DNA sequence of the human X chromosome.</title>
        <authorList>
            <person name="Ross M.T."/>
            <person name="Grafham D.V."/>
            <person name="Coffey A.J."/>
            <person name="Scherer S."/>
            <person name="McLay K."/>
            <person name="Muzny D."/>
            <person name="Platzer M."/>
            <person name="Howell G.R."/>
            <person name="Burrows C."/>
            <person name="Bird C.P."/>
            <person name="Frankish A."/>
            <person name="Lovell F.L."/>
            <person name="Howe K.L."/>
            <person name="Ashurst J.L."/>
            <person name="Fulton R.S."/>
            <person name="Sudbrak R."/>
            <person name="Wen G."/>
            <person name="Jones M.C."/>
            <person name="Hurles M.E."/>
            <person name="Andrews T.D."/>
            <person name="Scott C.E."/>
            <person name="Searle S."/>
            <person name="Ramser J."/>
            <person name="Whittaker A."/>
            <person name="Deadman R."/>
            <person name="Carter N.P."/>
            <person name="Hunt S.E."/>
            <person name="Chen R."/>
            <person name="Cree A."/>
            <person name="Gunaratne P."/>
            <person name="Havlak P."/>
            <person name="Hodgson A."/>
            <person name="Metzker M.L."/>
            <person name="Richards S."/>
            <person name="Scott G."/>
            <person name="Steffen D."/>
            <person name="Sodergren E."/>
            <person name="Wheeler D.A."/>
            <person name="Worley K.C."/>
            <person name="Ainscough R."/>
            <person name="Ambrose K.D."/>
            <person name="Ansari-Lari M.A."/>
            <person name="Aradhya S."/>
            <person name="Ashwell R.I."/>
            <person name="Babbage A.K."/>
            <person name="Bagguley C.L."/>
            <person name="Ballabio A."/>
            <person name="Banerjee R."/>
            <person name="Barker G.E."/>
            <person name="Barlow K.F."/>
            <person name="Barrett I.P."/>
            <person name="Bates K.N."/>
            <person name="Beare D.M."/>
            <person name="Beasley H."/>
            <person name="Beasley O."/>
            <person name="Beck A."/>
            <person name="Bethel G."/>
            <person name="Blechschmidt K."/>
            <person name="Brady N."/>
            <person name="Bray-Allen S."/>
            <person name="Bridgeman A.M."/>
            <person name="Brown A.J."/>
            <person name="Brown M.J."/>
            <person name="Bonnin D."/>
            <person name="Bruford E.A."/>
            <person name="Buhay C."/>
            <person name="Burch P."/>
            <person name="Burford D."/>
            <person name="Burgess J."/>
            <person name="Burrill W."/>
            <person name="Burton J."/>
            <person name="Bye J.M."/>
            <person name="Carder C."/>
            <person name="Carrel L."/>
            <person name="Chako J."/>
            <person name="Chapman J.C."/>
            <person name="Chavez D."/>
            <person name="Chen E."/>
            <person name="Chen G."/>
            <person name="Chen Y."/>
            <person name="Chen Z."/>
            <person name="Chinault C."/>
            <person name="Ciccodicola A."/>
            <person name="Clark S.Y."/>
            <person name="Clarke G."/>
            <person name="Clee C.M."/>
            <person name="Clegg S."/>
            <person name="Clerc-Blankenburg K."/>
            <person name="Clifford K."/>
            <person name="Cobley V."/>
            <person name="Cole C.G."/>
            <person name="Conquer J.S."/>
            <person name="Corby N."/>
            <person name="Connor R.E."/>
            <person name="David R."/>
            <person name="Davies J."/>
            <person name="Davis C."/>
            <person name="Davis J."/>
            <person name="Delgado O."/>
            <person name="Deshazo D."/>
            <person name="Dhami P."/>
            <person name="Ding Y."/>
            <person name="Dinh H."/>
            <person name="Dodsworth S."/>
            <person name="Draper H."/>
            <person name="Dugan-Rocha S."/>
            <person name="Dunham A."/>
            <person name="Dunn M."/>
            <person name="Durbin K.J."/>
            <person name="Dutta I."/>
            <person name="Eades T."/>
            <person name="Ellwood M."/>
            <person name="Emery-Cohen A."/>
            <person name="Errington H."/>
            <person name="Evans K.L."/>
            <person name="Faulkner L."/>
            <person name="Francis F."/>
            <person name="Frankland J."/>
            <person name="Fraser A.E."/>
            <person name="Galgoczy P."/>
            <person name="Gilbert J."/>
            <person name="Gill R."/>
            <person name="Gloeckner G."/>
            <person name="Gregory S.G."/>
            <person name="Gribble S."/>
            <person name="Griffiths C."/>
            <person name="Grocock R."/>
            <person name="Gu Y."/>
            <person name="Gwilliam R."/>
            <person name="Hamilton C."/>
            <person name="Hart E.A."/>
            <person name="Hawes A."/>
            <person name="Heath P.D."/>
            <person name="Heitmann K."/>
            <person name="Hennig S."/>
            <person name="Hernandez J."/>
            <person name="Hinzmann B."/>
            <person name="Ho S."/>
            <person name="Hoffs M."/>
            <person name="Howden P.J."/>
            <person name="Huckle E.J."/>
            <person name="Hume J."/>
            <person name="Hunt P.J."/>
            <person name="Hunt A.R."/>
            <person name="Isherwood J."/>
            <person name="Jacob L."/>
            <person name="Johnson D."/>
            <person name="Jones S."/>
            <person name="de Jong P.J."/>
            <person name="Joseph S.S."/>
            <person name="Keenan S."/>
            <person name="Kelly S."/>
            <person name="Kershaw J.K."/>
            <person name="Khan Z."/>
            <person name="Kioschis P."/>
            <person name="Klages S."/>
            <person name="Knights A.J."/>
            <person name="Kosiura A."/>
            <person name="Kovar-Smith C."/>
            <person name="Laird G.K."/>
            <person name="Langford C."/>
            <person name="Lawlor S."/>
            <person name="Leversha M."/>
            <person name="Lewis L."/>
            <person name="Liu W."/>
            <person name="Lloyd C."/>
            <person name="Lloyd D.M."/>
            <person name="Loulseged H."/>
            <person name="Loveland J.E."/>
            <person name="Lovell J.D."/>
            <person name="Lozado R."/>
            <person name="Lu J."/>
            <person name="Lyne R."/>
            <person name="Ma J."/>
            <person name="Maheshwari M."/>
            <person name="Matthews L.H."/>
            <person name="McDowall J."/>
            <person name="McLaren S."/>
            <person name="McMurray A."/>
            <person name="Meidl P."/>
            <person name="Meitinger T."/>
            <person name="Milne S."/>
            <person name="Miner G."/>
            <person name="Mistry S.L."/>
            <person name="Morgan M."/>
            <person name="Morris S."/>
            <person name="Mueller I."/>
            <person name="Mullikin J.C."/>
            <person name="Nguyen N."/>
            <person name="Nordsiek G."/>
            <person name="Nyakatura G."/>
            <person name="O'dell C.N."/>
            <person name="Okwuonu G."/>
            <person name="Palmer S."/>
            <person name="Pandian R."/>
            <person name="Parker D."/>
            <person name="Parrish J."/>
            <person name="Pasternak S."/>
            <person name="Patel D."/>
            <person name="Pearce A.V."/>
            <person name="Pearson D.M."/>
            <person name="Pelan S.E."/>
            <person name="Perez L."/>
            <person name="Porter K.M."/>
            <person name="Ramsey Y."/>
            <person name="Reichwald K."/>
            <person name="Rhodes S."/>
            <person name="Ridler K.A."/>
            <person name="Schlessinger D."/>
            <person name="Schueler M.G."/>
            <person name="Sehra H.K."/>
            <person name="Shaw-Smith C."/>
            <person name="Shen H."/>
            <person name="Sheridan E.M."/>
            <person name="Shownkeen R."/>
            <person name="Skuce C.D."/>
            <person name="Smith M.L."/>
            <person name="Sotheran E.C."/>
            <person name="Steingruber H.E."/>
            <person name="Steward C.A."/>
            <person name="Storey R."/>
            <person name="Swann R.M."/>
            <person name="Swarbreck D."/>
            <person name="Tabor P.E."/>
            <person name="Taudien S."/>
            <person name="Taylor T."/>
            <person name="Teague B."/>
            <person name="Thomas K."/>
            <person name="Thorpe A."/>
            <person name="Timms K."/>
            <person name="Tracey A."/>
            <person name="Trevanion S."/>
            <person name="Tromans A.C."/>
            <person name="d'Urso M."/>
            <person name="Verduzco D."/>
            <person name="Villasana D."/>
            <person name="Waldron L."/>
            <person name="Wall M."/>
            <person name="Wang Q."/>
            <person name="Warren J."/>
            <person name="Warry G.L."/>
            <person name="Wei X."/>
            <person name="West A."/>
            <person name="Whitehead S.L."/>
            <person name="Whiteley M.N."/>
            <person name="Wilkinson J.E."/>
            <person name="Willey D.L."/>
            <person name="Williams G."/>
            <person name="Williams L."/>
            <person name="Williamson A."/>
            <person name="Williamson H."/>
            <person name="Wilming L."/>
            <person name="Woodmansey R.L."/>
            <person name="Wray P.W."/>
            <person name="Yen J."/>
            <person name="Zhang J."/>
            <person name="Zhou J."/>
            <person name="Zoghbi H."/>
            <person name="Zorilla S."/>
            <person name="Buck D."/>
            <person name="Reinhardt R."/>
            <person name="Poustka A."/>
            <person name="Rosenthal A."/>
            <person name="Lehrach H."/>
            <person name="Meindl A."/>
            <person name="Minx P.J."/>
            <person name="Hillier L.W."/>
            <person name="Willard H.F."/>
            <person name="Wilson R.K."/>
            <person name="Waterston R.H."/>
            <person name="Rice C.M."/>
            <person name="Vaudin M."/>
            <person name="Coulson A."/>
            <person name="Nelson D.L."/>
            <person name="Weinstock G."/>
            <person name="Sulston J.E."/>
            <person name="Durbin R.M."/>
            <person name="Hubbard T."/>
            <person name="Gibbs R.A."/>
            <person name="Beck S."/>
            <person name="Rogers J."/>
            <person name="Bentley D.R."/>
        </authorList>
    </citation>
    <scope>NUCLEOTIDE SEQUENCE [LARGE SCALE GENOMIC DNA]</scope>
</reference>
<reference key="3">
    <citation type="submission" date="2005-09" db="EMBL/GenBank/DDBJ databases">
        <authorList>
            <person name="Mural R.J."/>
            <person name="Istrail S."/>
            <person name="Sutton G.G."/>
            <person name="Florea L."/>
            <person name="Halpern A.L."/>
            <person name="Mobarry C.M."/>
            <person name="Lippert R."/>
            <person name="Walenz B."/>
            <person name="Shatkay H."/>
            <person name="Dew I."/>
            <person name="Miller J.R."/>
            <person name="Flanigan M.J."/>
            <person name="Edwards N.J."/>
            <person name="Bolanos R."/>
            <person name="Fasulo D."/>
            <person name="Halldorsson B.V."/>
            <person name="Hannenhalli S."/>
            <person name="Turner R."/>
            <person name="Yooseph S."/>
            <person name="Lu F."/>
            <person name="Nusskern D.R."/>
            <person name="Shue B.C."/>
            <person name="Zheng X.H."/>
            <person name="Zhong F."/>
            <person name="Delcher A.L."/>
            <person name="Huson D.H."/>
            <person name="Kravitz S.A."/>
            <person name="Mouchard L."/>
            <person name="Reinert K."/>
            <person name="Remington K.A."/>
            <person name="Clark A.G."/>
            <person name="Waterman M.S."/>
            <person name="Eichler E.E."/>
            <person name="Adams M.D."/>
            <person name="Hunkapiller M.W."/>
            <person name="Myers E.W."/>
            <person name="Venter J.C."/>
        </authorList>
    </citation>
    <scope>NUCLEOTIDE SEQUENCE [LARGE SCALE GENOMIC DNA]</scope>
</reference>
<reference key="4">
    <citation type="journal article" date="2004" name="Genome Res.">
        <title>The status, quality, and expansion of the NIH full-length cDNA project: the Mammalian Gene Collection (MGC).</title>
        <authorList>
            <consortium name="The MGC Project Team"/>
        </authorList>
    </citation>
    <scope>NUCLEOTIDE SEQUENCE [LARGE SCALE MRNA] (ISOFORM 1)</scope>
    <source>
        <tissue>Eye</tissue>
    </source>
</reference>
<reference key="5">
    <citation type="journal article" date="1997" name="Gene">
        <title>SA-1, a nuclear protein encoded by one member of a novel gene family: molecular cloning and detection in hemopoietic organs.</title>
        <authorList>
            <person name="Carramolino L."/>
            <person name="Lee B.C."/>
            <person name="Zaballos A."/>
            <person name="Peled A."/>
            <person name="Barthelemy I."/>
            <person name="Shav-Tal Y."/>
            <person name="Prieto I."/>
            <person name="Carmi P."/>
            <person name="Gothelf Y."/>
            <person name="Gonzalez de Buitrago G."/>
            <person name="Aracil M."/>
            <person name="Marquez G."/>
            <person name="Barbero J.L."/>
            <person name="Zipori D."/>
        </authorList>
    </citation>
    <scope>NUCLEOTIDE SEQUENCE [MRNA] OF 48-1231 (ISOFORM 1)</scope>
    <source>
        <tissue>Thymus</tissue>
    </source>
</reference>
<reference key="6">
    <citation type="journal article" date="1998" name="Gene">
        <authorList>
            <person name="Carramolino L."/>
            <person name="Lee B.C."/>
            <person name="Zaballos A."/>
            <person name="Peled A."/>
            <person name="Barthelemy I."/>
            <person name="Shav-Tal Y."/>
            <person name="Prieto I."/>
            <person name="Carmi P."/>
            <person name="Gothelf Y."/>
            <person name="Gonzalez de Buitrago G."/>
            <person name="Aracil M."/>
            <person name="Marquez G."/>
            <person name="Barbero J.L."/>
            <person name="Zipori D."/>
        </authorList>
    </citation>
    <scope>ERRATUM OF PUBMED:9305759</scope>
</reference>
<reference key="7">
    <citation type="journal article" date="2000" name="J. Cell Biol.">
        <title>Characterization of vertebrate cohesin complexes and their regulation in prophase.</title>
        <authorList>
            <person name="Sumara I."/>
            <person name="Vorlaufer E."/>
            <person name="Gieffers C."/>
            <person name="Peters B.H."/>
            <person name="Peters J.-M."/>
        </authorList>
    </citation>
    <scope>IDENTIFICATION IN A COHESIN COMPLEX WITH SMC1A AND SMC3</scope>
</reference>
<reference key="8">
    <citation type="journal article" date="2002" name="EMBO Rep.">
        <title>STAG2 and Rad21 mammalian mitotic cohesins are implicated in meiosis.</title>
        <authorList>
            <person name="Prieto I."/>
            <person name="Pezzi N."/>
            <person name="Buesa J.M."/>
            <person name="Kremer L."/>
            <person name="Barthelemy I."/>
            <person name="Carreiro C."/>
            <person name="Roncal F."/>
            <person name="Martinez A."/>
            <person name="Gomez L."/>
            <person name="Fernandez R."/>
            <person name="Martinez-A C."/>
            <person name="Barbero J.L."/>
        </authorList>
    </citation>
    <scope>FUNCTION IN EARLY STEPS OF MEIOSIS</scope>
</reference>
<reference key="9">
    <citation type="journal article" date="2006" name="Cell">
        <title>Global, in vivo, and site-specific phosphorylation dynamics in signaling networks.</title>
        <authorList>
            <person name="Olsen J.V."/>
            <person name="Blagoev B."/>
            <person name="Gnad F."/>
            <person name="Macek B."/>
            <person name="Kumar C."/>
            <person name="Mortensen P."/>
            <person name="Mann M."/>
        </authorList>
    </citation>
    <scope>PHOSPHORYLATION [LARGE SCALE ANALYSIS] AT SER-1061</scope>
    <scope>IDENTIFICATION BY MASS SPECTROMETRY [LARGE SCALE ANALYSIS]</scope>
    <source>
        <tissue>Cervix carcinoma</tissue>
    </source>
</reference>
<reference key="10">
    <citation type="journal article" date="2008" name="Proc. Natl. Acad. Sci. U.S.A.">
        <title>A quantitative atlas of mitotic phosphorylation.</title>
        <authorList>
            <person name="Dephoure N."/>
            <person name="Zhou C."/>
            <person name="Villen J."/>
            <person name="Beausoleil S.A."/>
            <person name="Bakalarski C.E."/>
            <person name="Elledge S.J."/>
            <person name="Gygi S.P."/>
        </authorList>
    </citation>
    <scope>PHOSPHORYLATION [LARGE SCALE ANALYSIS] AT SER-1058 AND SER-1061</scope>
    <scope>IDENTIFICATION BY MASS SPECTROMETRY [LARGE SCALE ANALYSIS]</scope>
    <source>
        <tissue>Cervix carcinoma</tissue>
    </source>
</reference>
<reference key="11">
    <citation type="journal article" date="2009" name="Sci. Signal.">
        <title>Quantitative phosphoproteomic analysis of T cell receptor signaling reveals system-wide modulation of protein-protein interactions.</title>
        <authorList>
            <person name="Mayya V."/>
            <person name="Lundgren D.H."/>
            <person name="Hwang S.-I."/>
            <person name="Rezaul K."/>
            <person name="Wu L."/>
            <person name="Eng J.K."/>
            <person name="Rodionov V."/>
            <person name="Han D.K."/>
        </authorList>
    </citation>
    <scope>PHOSPHORYLATION [LARGE SCALE ANALYSIS] AT SER-1058; SER-1061 AND THR-1112</scope>
    <scope>IDENTIFICATION BY MASS SPECTROMETRY [LARGE SCALE ANALYSIS]</scope>
    <source>
        <tissue>Leukemic T-cell</tissue>
    </source>
</reference>
<reference key="12">
    <citation type="journal article" date="2009" name="Science">
        <title>Lysine acetylation targets protein complexes and co-regulates major cellular functions.</title>
        <authorList>
            <person name="Choudhary C."/>
            <person name="Kumar C."/>
            <person name="Gnad F."/>
            <person name="Nielsen M.L."/>
            <person name="Rehman M."/>
            <person name="Walther T.C."/>
            <person name="Olsen J.V."/>
            <person name="Mann M."/>
        </authorList>
    </citation>
    <scope>ACETYLATION [LARGE SCALE ANALYSIS] AT LYS-607</scope>
    <scope>IDENTIFICATION BY MASS SPECTROMETRY [LARGE SCALE ANALYSIS]</scope>
</reference>
<reference key="13">
    <citation type="journal article" date="2010" name="Sci. Signal.">
        <title>Quantitative phosphoproteomics reveals widespread full phosphorylation site occupancy during mitosis.</title>
        <authorList>
            <person name="Olsen J.V."/>
            <person name="Vermeulen M."/>
            <person name="Santamaria A."/>
            <person name="Kumar C."/>
            <person name="Miller M.L."/>
            <person name="Jensen L.J."/>
            <person name="Gnad F."/>
            <person name="Cox J."/>
            <person name="Jensen T.S."/>
            <person name="Nigg E.A."/>
            <person name="Brunak S."/>
            <person name="Mann M."/>
        </authorList>
    </citation>
    <scope>ACETYLATION [LARGE SCALE ANALYSIS] AT MET-1</scope>
    <scope>PHOSPHORYLATION [LARGE SCALE ANALYSIS] AT SER-1061; SER-1177 AND SER-1178</scope>
    <scope>IDENTIFICATION BY MASS SPECTROMETRY [LARGE SCALE ANALYSIS]</scope>
    <source>
        <tissue>Cervix carcinoma</tissue>
    </source>
</reference>
<reference key="14">
    <citation type="journal article" date="2011" name="BMC Syst. Biol.">
        <title>Initial characterization of the human central proteome.</title>
        <authorList>
            <person name="Burkard T.R."/>
            <person name="Planyavsky M."/>
            <person name="Kaupe I."/>
            <person name="Breitwieser F.P."/>
            <person name="Buerckstuemmer T."/>
            <person name="Bennett K.L."/>
            <person name="Superti-Furga G."/>
            <person name="Colinge J."/>
        </authorList>
    </citation>
    <scope>IDENTIFICATION BY MASS SPECTROMETRY [LARGE SCALE ANALYSIS]</scope>
</reference>
<reference key="15">
    <citation type="journal article" date="2011" name="Sci. Signal.">
        <title>System-wide temporal characterization of the proteome and phosphoproteome of human embryonic stem cell differentiation.</title>
        <authorList>
            <person name="Rigbolt K.T."/>
            <person name="Prokhorova T.A."/>
            <person name="Akimov V."/>
            <person name="Henningsen J."/>
            <person name="Johansen P.T."/>
            <person name="Kratchmarova I."/>
            <person name="Kassem M."/>
            <person name="Mann M."/>
            <person name="Olsen J.V."/>
            <person name="Blagoev B."/>
        </authorList>
    </citation>
    <scope>PHOSPHORYLATION [LARGE SCALE ANALYSIS] AT SER-1061</scope>
    <scope>IDENTIFICATION BY MASS SPECTROMETRY [LARGE SCALE ANALYSIS]</scope>
</reference>
<reference key="16">
    <citation type="journal article" date="2013" name="J. Proteome Res.">
        <title>Toward a comprehensive characterization of a human cancer cell phosphoproteome.</title>
        <authorList>
            <person name="Zhou H."/>
            <person name="Di Palma S."/>
            <person name="Preisinger C."/>
            <person name="Peng M."/>
            <person name="Polat A.N."/>
            <person name="Heck A.J."/>
            <person name="Mohammed S."/>
        </authorList>
    </citation>
    <scope>PHOSPHORYLATION [LARGE SCALE ANALYSIS] AT SER-1058 AND SER-1061</scope>
    <scope>IDENTIFICATION BY MASS SPECTROMETRY [LARGE SCALE ANALYSIS]</scope>
    <source>
        <tissue>Cervix carcinoma</tissue>
        <tissue>Erythroleukemia</tissue>
    </source>
</reference>
<reference key="17">
    <citation type="journal article" date="2014" name="J. Proteomics">
        <title>An enzyme assisted RP-RPLC approach for in-depth analysis of human liver phosphoproteome.</title>
        <authorList>
            <person name="Bian Y."/>
            <person name="Song C."/>
            <person name="Cheng K."/>
            <person name="Dong M."/>
            <person name="Wang F."/>
            <person name="Huang J."/>
            <person name="Sun D."/>
            <person name="Wang L."/>
            <person name="Ye M."/>
            <person name="Zou H."/>
        </authorList>
    </citation>
    <scope>IDENTIFICATION BY MASS SPECTROMETRY [LARGE SCALE ANALYSIS]</scope>
    <source>
        <tissue>Liver</tissue>
    </source>
</reference>
<reference key="18">
    <citation type="journal article" date="2017" name="Am. J. Med. Genet. A">
        <title>De novo loss-of-function variants in STAG2 are associated with developmental delay, microcephaly, and congenital anomalies.</title>
        <authorList>
            <consortium name="UCLA Clinical Genomics Center"/>
            <person name="Mullegama S.V."/>
            <person name="Klein S.D."/>
            <person name="Mulatinho M.V."/>
            <person name="Senaratne T.N."/>
            <person name="Singh K."/>
            <person name="Nguyen D.C."/>
            <person name="Gallant N.M."/>
            <person name="Strom S.P."/>
            <person name="Ghahremani S."/>
            <person name="Rao N.P."/>
            <person name="Martinez-Agosto J.A."/>
        </authorList>
    </citation>
    <scope>FUNCTION</scope>
    <scope>INVOLVEMENT IN MKMS</scope>
    <scope>VARIANTS MKMS 69-ARG--PHE-1231 DEL AND GLN-604</scope>
    <scope>CHARACTERIZATION OF VARIANT MKMS 69-ARG--PHE-1231 DEL</scope>
</reference>
<reference key="19">
    <citation type="journal article" date="2017" name="NPJ Genom. Med.">
        <title>Familial STAG2 germline mutation defines a new human cohesinopathy.</title>
        <authorList>
            <person name="Soardi F.C."/>
            <person name="Machado-Silva A."/>
            <person name="Linhares N.D."/>
            <person name="Zheng G."/>
            <person name="Qu Q."/>
            <person name="Pena H.B."/>
            <person name="Martins T.M.M."/>
            <person name="Vieira H.G.S."/>
            <person name="Pereira N.B."/>
            <person name="Melo-Minardi R.C."/>
            <person name="Gomes C.C."/>
            <person name="Gomez R.S."/>
            <person name="Gomes D.A."/>
            <person name="Pires D.E.V."/>
            <person name="Ascher D.B."/>
            <person name="Yu H."/>
            <person name="Pena S.D.J."/>
        </authorList>
    </citation>
    <scope>FUNCTION</scope>
    <scope>IDENTIFICATION IN COHESIN COMPLEX</scope>
    <scope>INVOLVEMENT IN MKMS</scope>
    <scope>VARIANT MKMS ASN-327</scope>
    <scope>CHARACTERIZATION OF VARIANT MKMS ASN-327</scope>
</reference>
<reference key="20">
    <citation type="journal article" date="2019" name="Brain">
        <title>Cohesin complex-associated holoprosencephaly.</title>
        <authorList>
            <person name="Kruszka P."/>
            <person name="Berger S.I."/>
            <person name="Casa V."/>
            <person name="Dekker M.R."/>
            <person name="Gaesser J."/>
            <person name="Weiss K."/>
            <person name="Martinez A.F."/>
            <person name="Murdock D.R."/>
            <person name="Louie R.J."/>
            <person name="Prijoles E.J."/>
            <person name="Lichty A.W."/>
            <person name="Brouwer O.F."/>
            <person name="Zonneveld-Huijssoon E."/>
            <person name="Stephan M.J."/>
            <person name="Hogue J."/>
            <person name="Hu P."/>
            <person name="Tanima-Nagai M."/>
            <person name="Everson J.L."/>
            <person name="Prasad C."/>
            <person name="Cereda A."/>
            <person name="Iascone M."/>
            <person name="Schreiber A."/>
            <person name="Zurcher V."/>
            <person name="Corsten-Janssen N."/>
            <person name="Escobar L."/>
            <person name="Clegg N.J."/>
            <person name="Delgado M.R."/>
            <person name="Hajirnis O."/>
            <person name="Balasubramanian M."/>
            <person name="Kayserili H."/>
            <person name="Deardorff M."/>
            <person name="Poot R.A."/>
            <person name="Wendt K.S."/>
            <person name="Lipinski R.J."/>
            <person name="Muenke M."/>
        </authorList>
    </citation>
    <scope>INVOLVEMENT IN HPE13</scope>
    <scope>VARIANTS HPE13 69-ARG--PHE-1231 DEL; 146-ARG--PHE-1231 DEL; 259-ARG--PHE-1231 DEL AND 1012-ARG--PHE-1231 DEL</scope>
</reference>
<reference key="21">
    <citation type="journal article" date="2019" name="Genet. Med.">
        <title>Clinical exome sequencing reveals locus heterogeneity and phenotypic variability of cohesinopathies.</title>
        <authorList>
            <consortium name="DDD Study"/>
            <person name="Yuan B."/>
            <person name="Neira J."/>
            <person name="Pehlivan D."/>
            <person name="Santiago-Sim T."/>
            <person name="Song X."/>
            <person name="Rosenfeld J."/>
            <person name="Posey J.E."/>
            <person name="Patel V."/>
            <person name="Jin W."/>
            <person name="Adam M.P."/>
            <person name="Baple E.L."/>
            <person name="Dean J."/>
            <person name="Fong C.T."/>
            <person name="Hickey S.E."/>
            <person name="Hudgins L."/>
            <person name="Leon E."/>
            <person name="Madan-Khetarpal S."/>
            <person name="Rawlins L."/>
            <person name="Rustad C.F."/>
            <person name="Stray-Pedersen A."/>
            <person name="Tveten K."/>
            <person name="Wenger O."/>
            <person name="Diaz J."/>
            <person name="Jenkins L."/>
            <person name="Martin L."/>
            <person name="McGuire M."/>
            <person name="Pietryga M."/>
            <person name="Ramsdell L."/>
            <person name="Slattery L."/>
            <person name="Abid F."/>
            <person name="Bertuch A.A."/>
            <person name="Grange D."/>
            <person name="Immken L."/>
            <person name="Schaaf C.P."/>
            <person name="Van Esch H."/>
            <person name="Bi W."/>
            <person name="Cheung S.W."/>
            <person name="Breman A.M."/>
            <person name="Smith J.L."/>
            <person name="Shaw C."/>
            <person name="Crosby A.H."/>
            <person name="Eng C."/>
            <person name="Yang Y."/>
            <person name="Lupski J.R."/>
            <person name="Xiao R."/>
            <person name="Liu P."/>
        </authorList>
    </citation>
    <scope>VARIANTS MKMS 140-GLN--PHE-1231 DEL; CYS-159; 535-CYS--PHE-1231 DEL AND GLN-604</scope>
</reference>
<reference key="22">
    <citation type="journal article" date="2019" name="J. Hum. Genet.">
        <title>Nonsense variants in STAG2 result in distinct sex-dependent phenotypes.</title>
        <authorList>
            <person name="Aoi H."/>
            <person name="Lei M."/>
            <person name="Mizuguchi T."/>
            <person name="Nishioka N."/>
            <person name="Goto T."/>
            <person name="Miyama S."/>
            <person name="Suzuki T."/>
            <person name="Iwama K."/>
            <person name="Uchiyama Y."/>
            <person name="Mitsuhashi S."/>
            <person name="Itakura A."/>
            <person name="Takeda S."/>
            <person name="Matsumoto N."/>
        </authorList>
    </citation>
    <scope>RETRACTED PAPER</scope>
</reference>
<reference key="23">
    <citation type="journal article" date="2020" name="J. Hum. Genet.">
        <authorList>
            <person name="Aoi H."/>
            <person name="Lei M."/>
            <person name="Mizuguchi T."/>
            <person name="Nishioka N."/>
            <person name="Goto T."/>
            <person name="Miyama S."/>
            <person name="Suzuki T."/>
            <person name="Iwama K."/>
            <person name="Uchiyama Y."/>
            <person name="Mitsuhashi S."/>
            <person name="Itakura A."/>
            <person name="Takeda S."/>
            <person name="Matsumoto N."/>
        </authorList>
    </citation>
    <scope>RETRACTION NOTICE OF PUBMED:30765867</scope>
</reference>
<reference key="24">
    <citation type="journal article" date="2019" name="Mol. Genet. Genomic Med.">
        <title>Mutations in STAG2 cause an X-linked cohesinopathy associated with undergrowth, developmental delay, and dysmorphia: Expanding the phenotype in males.</title>
        <authorList>
            <consortium name="UCLA Clinical Genomics Center"/>
            <person name="Mullegama S.V."/>
            <person name="Klein S.D."/>
            <person name="Signer R.H."/>
            <person name="Vilain E."/>
            <person name="Martinez-Agosto J.A."/>
        </authorList>
    </citation>
    <scope>VARIANT MKMS ASN-1009</scope>
</reference>
<sequence>MIAAPEIPTDFNLLQESETHFSSDTDFEDIEGKNQKQGKGKTCKKGKKGPAEKGKGGNGGGKPPSGPNRMNGHHQQNGVENMMLFEVVKMGKSAMQSVVDDWIESYKHDRDIALLDLINFFIQCSGCKGVVTAEMFRHMQNSEIIRKMTEEFDEDSGDYPLTMAGPQWKKFKSSFCEFIGVLVRQCQYSIIYDEYMMDTVISLLTGLSDSQVRAFRHTSTLAAMKLMTALVNVALNLSINMDNTQRQYEAERNKMIGKRANERLELLLQKRKELQENQDEIENMMNAIFKGVFVHRYRDAIAEIRAICIEEIGIWMKMYSDAFLNDSYLKYVGWTMHDKQGEVRLKCLTALQGLYYNKELNSKLELFTSRFKDRIVSMTLDKEYDVAVQAIKLLTLVLQSSEEVLTAEDCENVYHLVYSAHRPVAVAAGEFLYKKLFSRRDPEEDGMMKRRGRQGPNANLVKTLVFFFLESELHEHAAYLVDSMWDCATELLKDWECMNSLLLEEPLSGEEALTDRQESALIEIMLCTIRQAAECHPPVGRGTGKRVLTAKEKKTQLDDRTKITELFAVALPQLLAKYSVDAEKVTNLLQLPQYFDLEIYTTGRLEKHLDALLRQIRNIVEKHTDTDVLEACSKTYHALCNEEFTIFNRVDISRSQLIDELADKFNRLLEDFLQEGEEPDEDDAYQVLSTLKRITAFHNAHDLSKWDLFACNYKLLKTGIENGDMPEQIVIHALQCTHYVILWQLAKITESSSTKEDLLRLKKQMRVFCQICQHYLTNVNTTVKEQAFTILCDILMIFSHQIMSGGRDMLEPLVYTPDSSLQSELLSFILDHVFIEQDDDNNSADGQQEDEASKIEALHKRRNLLAAFCKLIVYTVVEMNTAADIFKQYMKYYNDYGDIIKETMSKTRQIDKIQCAKTLILSLQQLFNEMIQENGYNFDRSSSTFSGIKELARRFALTFGLDQLKTREAIAMLHKDGIEFAFKEPNPQGESHPPLNLAFLDILSEFSSKLLRQDKRTVYVYLEKFMTFQMSLRREDVWLPLMSYRNSLLAGGDDDTMSVISGISSRGSTVRSKKSKPSTGKRKVVEGMQLSLTEESSSSDSMWLSREQTLHTPVMMQTPQLTSTIMREPKRLRPEDSFMSVYPMQTEHHQTPLDYNRRGTSLMEDDEEPIVEDVMMSSEGRIEDLNEGMDFDTMDIDLPPSKNRRERTELKPDFFDPASIMDESVLGVSMF</sequence>
<protein>
    <recommendedName>
        <fullName>Cohesin subunit SA-2</fullName>
    </recommendedName>
    <alternativeName>
        <fullName>SCC3 homolog 2</fullName>
    </alternativeName>
    <alternativeName>
        <fullName>Stromal antigen 2</fullName>
    </alternativeName>
</protein>
<keyword id="KW-0002">3D-structure</keyword>
<keyword id="KW-0007">Acetylation</keyword>
<keyword id="KW-0025">Alternative splicing</keyword>
<keyword id="KW-0131">Cell cycle</keyword>
<keyword id="KW-0132">Cell division</keyword>
<keyword id="KW-0137">Centromere</keyword>
<keyword id="KW-0158">Chromosome</keyword>
<keyword id="KW-0159">Chromosome partition</keyword>
<keyword id="KW-0225">Disease variant</keyword>
<keyword id="KW-0370">Holoprosencephaly</keyword>
<keyword id="KW-0469">Meiosis</keyword>
<keyword id="KW-0498">Mitosis</keyword>
<keyword id="KW-0539">Nucleus</keyword>
<keyword id="KW-0597">Phosphoprotein</keyword>
<keyword id="KW-1267">Proteomics identification</keyword>
<keyword id="KW-1185">Reference proteome</keyword>
<feature type="chain" id="PRO_0000120185" description="Cohesin subunit SA-2">
    <location>
        <begin position="1"/>
        <end position="1231"/>
    </location>
</feature>
<feature type="domain" description="SCD" evidence="3">
    <location>
        <begin position="293"/>
        <end position="378"/>
    </location>
</feature>
<feature type="region of interest" description="Disordered" evidence="4">
    <location>
        <begin position="1"/>
        <end position="75"/>
    </location>
</feature>
<feature type="region of interest" description="Disordered" evidence="4">
    <location>
        <begin position="1064"/>
        <end position="1083"/>
    </location>
</feature>
<feature type="compositionally biased region" description="Basic residues" evidence="4">
    <location>
        <begin position="36"/>
        <end position="48"/>
    </location>
</feature>
<feature type="compositionally biased region" description="Basic residues" evidence="4">
    <location>
        <begin position="1071"/>
        <end position="1082"/>
    </location>
</feature>
<feature type="modified residue" description="N-acetylmethionine" evidence="20">
    <location>
        <position position="1"/>
    </location>
</feature>
<feature type="modified residue" description="N6-acetyllysine" evidence="18">
    <location>
        <position position="607"/>
    </location>
</feature>
<feature type="modified residue" description="Phosphoserine" evidence="17 19 22">
    <location>
        <position position="1058"/>
    </location>
</feature>
<feature type="modified residue" description="Phosphoserine" evidence="16 17 19 20 21 22">
    <location>
        <position position="1061"/>
    </location>
</feature>
<feature type="modified residue" description="Phosphoserine" evidence="2">
    <location>
        <position position="1064"/>
    </location>
</feature>
<feature type="modified residue" description="Phosphoserine" evidence="2">
    <location>
        <position position="1065"/>
    </location>
</feature>
<feature type="modified residue" description="Phosphothreonine" evidence="19">
    <location>
        <position position="1112"/>
    </location>
</feature>
<feature type="modified residue" description="Phosphoserine" evidence="20">
    <location>
        <position position="1177"/>
    </location>
</feature>
<feature type="modified residue" description="Phosphoserine" evidence="20">
    <location>
        <position position="1178"/>
    </location>
</feature>
<feature type="splice variant" id="VSP_041119" description="In isoform 2." evidence="13">
    <original>N</original>
    <variation>NTQVTWMLAQRQQEEARQQQERAAMSYVKLRTNLQHAI</variation>
    <location>
        <position position="1156"/>
    </location>
</feature>
<feature type="sequence variant" id="VAR_083967" description="In HPE13 and MKMS; patient cells show decreased protein abundance; increased sister chromatid cohesion." evidence="7 12">
    <location>
        <begin position="69"/>
        <end position="1231"/>
    </location>
</feature>
<feature type="sequence variant" id="VAR_082294" description="In MKMS." evidence="9">
    <location>
        <begin position="140"/>
        <end position="1231"/>
    </location>
</feature>
<feature type="sequence variant" id="VAR_083968" description="In HPE13." evidence="12">
    <location>
        <begin position="146"/>
        <end position="1231"/>
    </location>
</feature>
<feature type="sequence variant" id="VAR_082295" description="In MKMS." evidence="9">
    <original>Y</original>
    <variation>C</variation>
    <location>
        <position position="159"/>
    </location>
</feature>
<feature type="sequence variant" id="VAR_083969" description="In HPE13." evidence="12">
    <location>
        <begin position="259"/>
        <end position="1231"/>
    </location>
</feature>
<feature type="sequence variant" id="VAR_082296" description="In MKMS; loss of interaction with RAD21; loss of interaction with cohesin complex." evidence="8">
    <original>S</original>
    <variation>N</variation>
    <location>
        <position position="327"/>
    </location>
</feature>
<feature type="sequence variant" id="VAR_082297" description="In MKMS." evidence="9">
    <location>
        <begin position="535"/>
        <end position="1231"/>
    </location>
</feature>
<feature type="sequence variant" id="VAR_082298" description="In MKMS; uncertain significance." evidence="7 9">
    <original>R</original>
    <variation>Q</variation>
    <location>
        <position position="604"/>
    </location>
</feature>
<feature type="sequence variant" id="VAR_060114" description="In dbSNP:rs6655782.">
    <original>N</original>
    <variation>K</variation>
    <location>
        <position position="699"/>
    </location>
</feature>
<feature type="sequence variant" id="VAR_082300" description="In MKMS." evidence="10">
    <original>K</original>
    <variation>N</variation>
    <location>
        <position position="1009"/>
    </location>
</feature>
<feature type="sequence variant" id="VAR_083970" description="In HPE13." evidence="12">
    <location>
        <begin position="1012"/>
        <end position="1231"/>
    </location>
</feature>
<feature type="sequence conflict" description="In Ref. 1; CAD38591." evidence="14" ref="1">
    <original>G</original>
    <variation>D</variation>
    <location>
        <position position="46"/>
    </location>
</feature>
<feature type="sequence conflict" description="In Ref. 5; CAA99732." evidence="14" ref="5">
    <original>A</original>
    <variation>R</variation>
    <location>
        <position position="302"/>
    </location>
</feature>
<feature type="sequence conflict" description="In Ref. 1; CAD38591." evidence="14" ref="1">
    <original>S</original>
    <variation>G</variation>
    <location>
        <position position="327"/>
    </location>
</feature>
<feature type="sequence conflict" description="In Ref. 5; CAA99732." evidence="14" ref="5">
    <original>KH</original>
    <variation>ND</variation>
    <location>
        <begin position="607"/>
        <end position="608"/>
    </location>
</feature>
<feature type="sequence conflict" description="In Ref. 5; CAA99732." evidence="14" ref="5">
    <original>W</original>
    <variation>R</variation>
    <location>
        <position position="706"/>
    </location>
</feature>
<feature type="sequence conflict" description="In Ref. 1; CAD38591." evidence="14" ref="1">
    <original>A</original>
    <variation>V</variation>
    <location>
        <position position="710"/>
    </location>
</feature>
<feature type="sequence conflict" description="In Ref. 1; CAD38591." evidence="14" ref="1">
    <original>I</original>
    <variation>T</variation>
    <location>
        <position position="835"/>
    </location>
</feature>
<feature type="sequence conflict" description="In Ref. 1; CAH18271." evidence="14" ref="1">
    <original>A</original>
    <variation>T</variation>
    <location>
        <position position="971"/>
    </location>
</feature>
<feature type="sequence conflict" description="In Ref. 1; CAD38591." evidence="14" ref="1">
    <original>H</original>
    <variation>Y</variation>
    <location>
        <position position="992"/>
    </location>
</feature>
<feature type="sequence conflict" description="In Ref. 5; CAA99732." evidence="14" ref="5">
    <original>S</original>
    <variation>T</variation>
    <location>
        <position position="1105"/>
    </location>
</feature>
<feature type="sequence conflict" description="In Ref. 5; CAA99732." evidence="14" ref="5">
    <original>M</original>
    <variation>K</variation>
    <location>
        <position position="1144"/>
    </location>
</feature>
<feature type="helix" evidence="26">
    <location>
        <begin position="81"/>
        <end position="89"/>
    </location>
</feature>
<feature type="helix" evidence="26">
    <location>
        <begin position="95"/>
        <end position="108"/>
    </location>
</feature>
<feature type="helix" evidence="26">
    <location>
        <begin position="110"/>
        <end position="124"/>
    </location>
</feature>
<feature type="helix" evidence="26">
    <location>
        <begin position="133"/>
        <end position="138"/>
    </location>
</feature>
<feature type="helix" evidence="26">
    <location>
        <begin position="141"/>
        <end position="151"/>
    </location>
</feature>
<feature type="strand" evidence="26">
    <location>
        <begin position="155"/>
        <end position="157"/>
    </location>
</feature>
<feature type="helix" evidence="26">
    <location>
        <begin position="160"/>
        <end position="162"/>
    </location>
</feature>
<feature type="helix" evidence="26">
    <location>
        <begin position="166"/>
        <end position="185"/>
    </location>
</feature>
<feature type="turn" evidence="26">
    <location>
        <begin position="186"/>
        <end position="189"/>
    </location>
</feature>
<feature type="helix" evidence="26">
    <location>
        <begin position="190"/>
        <end position="192"/>
    </location>
</feature>
<feature type="strand" evidence="26">
    <location>
        <begin position="193"/>
        <end position="195"/>
    </location>
</feature>
<feature type="helix" evidence="26">
    <location>
        <begin position="196"/>
        <end position="207"/>
    </location>
</feature>
<feature type="helix" evidence="26">
    <location>
        <begin position="213"/>
        <end position="252"/>
    </location>
</feature>
<feature type="helix" evidence="26">
    <location>
        <begin position="261"/>
        <end position="291"/>
    </location>
</feature>
<feature type="helix" evidence="26">
    <location>
        <begin position="293"/>
        <end position="296"/>
    </location>
</feature>
<feature type="strand" evidence="26">
    <location>
        <begin position="299"/>
        <end position="301"/>
    </location>
</feature>
<feature type="helix" evidence="26">
    <location>
        <begin position="302"/>
        <end position="318"/>
    </location>
</feature>
<feature type="helix" evidence="26">
    <location>
        <begin position="320"/>
        <end position="323"/>
    </location>
</feature>
<feature type="helix" evidence="26">
    <location>
        <begin position="326"/>
        <end position="335"/>
    </location>
</feature>
<feature type="helix" evidence="26">
    <location>
        <begin position="341"/>
        <end position="356"/>
    </location>
</feature>
<feature type="helix" evidence="26">
    <location>
        <begin position="363"/>
        <end position="377"/>
    </location>
</feature>
<feature type="helix" evidence="26">
    <location>
        <begin position="378"/>
        <end position="380"/>
    </location>
</feature>
<feature type="strand" evidence="26">
    <location>
        <begin position="381"/>
        <end position="383"/>
    </location>
</feature>
<feature type="helix" evidence="26">
    <location>
        <begin position="384"/>
        <end position="400"/>
    </location>
</feature>
<feature type="strand" evidence="24">
    <location>
        <begin position="402"/>
        <end position="404"/>
    </location>
</feature>
<feature type="helix" evidence="26">
    <location>
        <begin position="407"/>
        <end position="415"/>
    </location>
</feature>
<feature type="helix" evidence="26">
    <location>
        <begin position="416"/>
        <end position="418"/>
    </location>
</feature>
<feature type="strand" evidence="24">
    <location>
        <begin position="419"/>
        <end position="421"/>
    </location>
</feature>
<feature type="helix" evidence="26">
    <location>
        <begin position="422"/>
        <end position="436"/>
    </location>
</feature>
<feature type="helix" evidence="26">
    <location>
        <begin position="458"/>
        <end position="470"/>
    </location>
</feature>
<feature type="strand" evidence="26">
    <location>
        <begin position="475"/>
        <end position="477"/>
    </location>
</feature>
<feature type="helix" evidence="26">
    <location>
        <begin position="478"/>
        <end position="483"/>
    </location>
</feature>
<feature type="turn" evidence="26">
    <location>
        <begin position="485"/>
        <end position="487"/>
    </location>
</feature>
<feature type="helix" evidence="26">
    <location>
        <begin position="489"/>
        <end position="492"/>
    </location>
</feature>
<feature type="helix" evidence="26">
    <location>
        <begin position="495"/>
        <end position="501"/>
    </location>
</feature>
<feature type="helix" evidence="26">
    <location>
        <begin position="515"/>
        <end position="533"/>
    </location>
</feature>
<feature type="turn" evidence="26">
    <location>
        <begin position="539"/>
        <end position="541"/>
    </location>
</feature>
<feature type="helix" evidence="26">
    <location>
        <begin position="550"/>
        <end position="577"/>
    </location>
</feature>
<feature type="turn" evidence="26">
    <location>
        <begin position="578"/>
        <end position="580"/>
    </location>
</feature>
<feature type="helix" evidence="26">
    <location>
        <begin position="582"/>
        <end position="588"/>
    </location>
</feature>
<feature type="helix" evidence="26">
    <location>
        <begin position="592"/>
        <end position="594"/>
    </location>
</feature>
<feature type="helix" evidence="26">
    <location>
        <begin position="598"/>
        <end position="602"/>
    </location>
</feature>
<feature type="helix" evidence="26">
    <location>
        <begin position="606"/>
        <end position="621"/>
    </location>
</feature>
<feature type="helix" evidence="26">
    <location>
        <begin position="626"/>
        <end position="639"/>
    </location>
</feature>
<feature type="helix" evidence="26">
    <location>
        <begin position="647"/>
        <end position="672"/>
    </location>
</feature>
<feature type="strand" evidence="25">
    <location>
        <begin position="674"/>
        <end position="676"/>
    </location>
</feature>
<feature type="helix" evidence="26">
    <location>
        <begin position="681"/>
        <end position="700"/>
    </location>
</feature>
<feature type="helix" evidence="26">
    <location>
        <begin position="704"/>
        <end position="706"/>
    </location>
</feature>
<feature type="helix" evidence="26">
    <location>
        <begin position="709"/>
        <end position="722"/>
    </location>
</feature>
<feature type="helix" evidence="26">
    <location>
        <begin position="727"/>
        <end position="747"/>
    </location>
</feature>
<feature type="strand" evidence="26">
    <location>
        <begin position="751"/>
        <end position="753"/>
    </location>
</feature>
<feature type="helix" evidence="26">
    <location>
        <begin position="757"/>
        <end position="775"/>
    </location>
</feature>
<feature type="strand" evidence="27">
    <location>
        <begin position="777"/>
        <end position="779"/>
    </location>
</feature>
<feature type="helix" evidence="26">
    <location>
        <begin position="781"/>
        <end position="797"/>
    </location>
</feature>
<feature type="helix" evidence="26">
    <location>
        <begin position="800"/>
        <end position="802"/>
    </location>
</feature>
<feature type="turn" evidence="26">
    <location>
        <begin position="804"/>
        <end position="806"/>
    </location>
</feature>
<feature type="helix" evidence="26">
    <location>
        <begin position="808"/>
        <end position="810"/>
    </location>
</feature>
<feature type="turn" evidence="25">
    <location>
        <begin position="811"/>
        <end position="813"/>
    </location>
</feature>
<feature type="helix" evidence="26">
    <location>
        <begin position="819"/>
        <end position="832"/>
    </location>
</feature>
<feature type="helix" evidence="26">
    <location>
        <begin position="851"/>
        <end position="873"/>
    </location>
</feature>
<feature type="helix" evidence="26">
    <location>
        <begin position="879"/>
        <end position="882"/>
    </location>
</feature>
<feature type="helix" evidence="26">
    <location>
        <begin position="883"/>
        <end position="886"/>
    </location>
</feature>
<feature type="turn" evidence="26">
    <location>
        <begin position="887"/>
        <end position="892"/>
    </location>
</feature>
<feature type="helix" evidence="26">
    <location>
        <begin position="893"/>
        <end position="910"/>
    </location>
</feature>
<feature type="helix" evidence="26">
    <location>
        <begin position="912"/>
        <end position="933"/>
    </location>
</feature>
<feature type="helix" evidence="26">
    <location>
        <begin position="943"/>
        <end position="957"/>
    </location>
</feature>
<feature type="helix" evidence="26">
    <location>
        <begin position="967"/>
        <end position="981"/>
    </location>
</feature>
<feature type="strand" evidence="26">
    <location>
        <begin position="982"/>
        <end position="984"/>
    </location>
</feature>
<feature type="strand" evidence="24">
    <location>
        <begin position="987"/>
        <end position="989"/>
    </location>
</feature>
<feature type="strand" evidence="27">
    <location>
        <begin position="990"/>
        <end position="992"/>
    </location>
</feature>
<feature type="helix" evidence="25">
    <location>
        <begin position="995"/>
        <end position="998"/>
    </location>
</feature>
<feature type="helix" evidence="26">
    <location>
        <begin position="999"/>
        <end position="1003"/>
    </location>
</feature>
<feature type="helix" evidence="26">
    <location>
        <begin position="1004"/>
        <end position="1009"/>
    </location>
</feature>
<feature type="helix" evidence="26">
    <location>
        <begin position="1014"/>
        <end position="1025"/>
    </location>
</feature>
<feature type="helix" evidence="26">
    <location>
        <begin position="1028"/>
        <end position="1032"/>
    </location>
</feature>
<feature type="strand" evidence="23">
    <location>
        <begin position="1035"/>
        <end position="1037"/>
    </location>
</feature>
<feature type="helix" evidence="26">
    <location>
        <begin position="1039"/>
        <end position="1045"/>
    </location>
</feature>
<gene>
    <name type="primary">STAG2</name>
    <name type="synonym">SA2</name>
</gene>
<evidence type="ECO:0000250" key="1"/>
<evidence type="ECO:0000250" key="2">
    <source>
        <dbReference type="UniProtKB" id="O35638"/>
    </source>
</evidence>
<evidence type="ECO:0000255" key="3">
    <source>
        <dbReference type="PROSITE-ProRule" id="PRU00750"/>
    </source>
</evidence>
<evidence type="ECO:0000256" key="4">
    <source>
        <dbReference type="SAM" id="MobiDB-lite"/>
    </source>
</evidence>
<evidence type="ECO:0000269" key="5">
    <source>
    </source>
</evidence>
<evidence type="ECO:0000269" key="6">
    <source>
    </source>
</evidence>
<evidence type="ECO:0000269" key="7">
    <source>
    </source>
</evidence>
<evidence type="ECO:0000269" key="8">
    <source>
    </source>
</evidence>
<evidence type="ECO:0000269" key="9">
    <source>
    </source>
</evidence>
<evidence type="ECO:0000269" key="10">
    <source>
    </source>
</evidence>
<evidence type="ECO:0000269" key="11">
    <source>
    </source>
</evidence>
<evidence type="ECO:0000269" key="12">
    <source>
    </source>
</evidence>
<evidence type="ECO:0000303" key="13">
    <source>
    </source>
</evidence>
<evidence type="ECO:0000305" key="14"/>
<evidence type="ECO:0000305" key="15">
    <source>
    </source>
</evidence>
<evidence type="ECO:0007744" key="16">
    <source>
    </source>
</evidence>
<evidence type="ECO:0007744" key="17">
    <source>
    </source>
</evidence>
<evidence type="ECO:0007744" key="18">
    <source>
    </source>
</evidence>
<evidence type="ECO:0007744" key="19">
    <source>
    </source>
</evidence>
<evidence type="ECO:0007744" key="20">
    <source>
    </source>
</evidence>
<evidence type="ECO:0007744" key="21">
    <source>
    </source>
</evidence>
<evidence type="ECO:0007744" key="22">
    <source>
    </source>
</evidence>
<evidence type="ECO:0007829" key="23">
    <source>
        <dbReference type="PDB" id="4PJU"/>
    </source>
</evidence>
<evidence type="ECO:0007829" key="24">
    <source>
        <dbReference type="PDB" id="4PJW"/>
    </source>
</evidence>
<evidence type="ECO:0007829" key="25">
    <source>
        <dbReference type="PDB" id="4PK7"/>
    </source>
</evidence>
<evidence type="ECO:0007829" key="26">
    <source>
        <dbReference type="PDB" id="6QNX"/>
    </source>
</evidence>
<evidence type="ECO:0007829" key="27">
    <source>
        <dbReference type="PDB" id="7ZJS"/>
    </source>
</evidence>
<accession>Q8N3U4</accession>
<accession>B1AMT5</accession>
<accession>D3DTF5</accession>
<accession>O00540</accession>
<accession>Q5JTI6</accession>
<accession>Q68DE9</accession>
<accession>Q9H1N8</accession>
<comment type="function">
    <text evidence="6">Component of cohesin complex, a complex required for the cohesion of sister chromatids after DNA replication. The cohesin complex apparently forms a large proteinaceous ring within which sister chromatids can be trapped. At anaphase, the complex is cleaved and dissociates from chromatin, allowing sister chromatids to segregate. The cohesin complex may also play a role in spindle pole assembly during mitosis.</text>
</comment>
<comment type="subunit">
    <text evidence="5">Interacts directly with RAD21 in cohesin complex. Cohesin complexes are composed of a heterodimer between a SMC1 protein (SMC1A or SMC1B) and SMC3, which are attached via their hinge domain, and RAD21 which link them at their heads, and one STAG protein (STAG1, STAG2 or STAG3). In cohesin complexes, STAG2 is mutually exclusive with STAG1 and STAG3.</text>
</comment>
<comment type="interaction">
    <interactant intactId="EBI-1057252">
        <id>Q8N3U4</id>
    </interactant>
    <interactant intactId="EBI-1175454">
        <id>Q29RF7</id>
        <label>PDS5A</label>
    </interactant>
    <organismsDiffer>false</organismsDiffer>
    <experiments>7</experiments>
</comment>
<comment type="interaction">
    <interactant intactId="EBI-1057252">
        <id>Q8N3U4</id>
    </interactant>
    <interactant intactId="EBI-1175604">
        <id>Q9NTI5</id>
        <label>PDS5B</label>
    </interactant>
    <organismsDiffer>false</organismsDiffer>
    <experiments>4</experiments>
</comment>
<comment type="interaction">
    <interactant intactId="EBI-1057252">
        <id>Q8N3U4</id>
    </interactant>
    <interactant intactId="EBI-80739">
        <id>O60216</id>
        <label>RAD21</label>
    </interactant>
    <organismsDiffer>false</organismsDiffer>
    <experiments>22</experiments>
</comment>
<comment type="interaction">
    <interactant intactId="EBI-1057252">
        <id>Q8N3U4</id>
    </interactant>
    <interactant intactId="EBI-989069">
        <id>Q5FBB7</id>
        <label>SGO1</label>
    </interactant>
    <organismsDiffer>false</organismsDiffer>
    <experiments>7</experiments>
</comment>
<comment type="interaction">
    <interactant intactId="EBI-1057252">
        <id>Q8N3U4</id>
    </interactant>
    <interactant intactId="EBI-80690">
        <id>Q14683</id>
        <label>SMC1A</label>
    </interactant>
    <organismsDiffer>false</organismsDiffer>
    <experiments>14</experiments>
</comment>
<comment type="interaction">
    <interactant intactId="EBI-1057252">
        <id>Q8N3U4</id>
    </interactant>
    <interactant intactId="EBI-80718">
        <id>Q9UQE7</id>
        <label>SMC3</label>
    </interactant>
    <organismsDiffer>false</organismsDiffer>
    <experiments>18</experiments>
</comment>
<comment type="interaction">
    <interactant intactId="EBI-1057252">
        <id>Q8N3U4</id>
    </interactant>
    <interactant intactId="EBI-2515416">
        <id>Q9NP77</id>
        <label>SSU72</label>
    </interactant>
    <organismsDiffer>false</organismsDiffer>
    <experiments>4</experiments>
</comment>
<comment type="interaction">
    <interactant intactId="EBI-1057252">
        <id>Q8N3U4</id>
    </interactant>
    <interactant intactId="EBI-1175097">
        <id>Q8WVM7</id>
        <label>STAG1</label>
    </interactant>
    <organismsDiffer>false</organismsDiffer>
    <experiments>6</experiments>
</comment>
<comment type="interaction">
    <interactant intactId="EBI-1057252">
        <id>Q8N3U4</id>
    </interactant>
    <interactant intactId="EBI-1022242">
        <id>Q7Z5K2</id>
        <label>WAPL</label>
    </interactant>
    <organismsDiffer>false</organismsDiffer>
    <experiments>14</experiments>
</comment>
<comment type="subcellular location">
    <subcellularLocation>
        <location>Nucleus</location>
    </subcellularLocation>
    <subcellularLocation>
        <location>Chromosome</location>
    </subcellularLocation>
    <subcellularLocation>
        <location>Chromosome</location>
        <location>Centromere</location>
    </subcellularLocation>
    <text>Associates with chromatin. Before prophase it is scattered along chromosome arms. During prophase, most of cohesin complexes dissociate from chromatin probably because of phosphorylation by PLK1, except at centromeres, where cohesin complexes remain. At anaphase, the RAD21 subunit of cohesin is cleaved, leading to the dissociation of the complex from chromosomes, allowing chromosome separation. In germ cells, cohesin complex dissociates from chromatin at prophase I, and may be replaced by a meiosis-specific cohesin complex.</text>
</comment>
<comment type="alternative products">
    <event type="alternative splicing"/>
    <isoform>
        <id>Q8N3U4-1</id>
        <name>1</name>
        <sequence type="displayed"/>
    </isoform>
    <isoform>
        <id>Q8N3U4-2</id>
        <name>2</name>
        <sequence type="described" ref="VSP_041119"/>
    </isoform>
</comment>
<comment type="PTM">
    <text evidence="1">Phosphorylated by PLK1. The large dissociation of cohesin from chromosome arms during prophase is partly due to its phosphorylation (By similarity).</text>
</comment>
<comment type="disease" evidence="7 8 9 10">
    <disease id="DI-05502">
        <name>Mullegama-Klein-Martinez syndrome</name>
        <acronym>MKMS</acronym>
        <description>An X-linked neurodevelopmental disorder with variable features including intellectual deficiency, microcephaly, microtia, hearing loss, developmental delay, dysmorphic features, language delay, congenital heart defect, and clinodactyly of the 5th finger.</description>
        <dbReference type="MIM" id="301022"/>
    </disease>
    <text>The disease is caused by variants affecting the gene represented in this entry.</text>
</comment>
<comment type="disease" evidence="12">
    <disease id="DI-05801">
        <name>Holoprosencephaly 13, X-linked</name>
        <acronym>HPE13</acronym>
        <description>An X-linked form of holoprosencephaly, a structural anomaly of the brain in which the developing forebrain fails to correctly separate into right and left hemispheres. Holoprosencephaly is genetically heterogeneous and associated with several distinct facies and phenotypic variability. HPE13 features range from full alobar holoprosencephaly with cyclopia to semilobar holoprosencephaly or septooptic dysplasia. Dysmorphic features include microcephaly, hypotelorism, low-set ears, micrognathia, and cleft lip/palate. Patients with a more severe phenotype may die in the newborn period, whereas those with a less severe phenotype show global developmental delay.</description>
        <dbReference type="MIM" id="301043"/>
    </disease>
    <text>The disease is caused by variants affecting the gene represented in this entry.</text>
</comment>
<comment type="similarity">
    <text evidence="14">Belongs to the SCC3 family.</text>
</comment>
<comment type="caution">
    <text evidence="11 15">Variants MKMS 743-Trp--Phe-1231 DEL and HPE13 1033-Arg--Phe-1231 DEL were previously described; however, the corresponding paper has been retracted as Case 1's sex was incorrectly reported invalidating the conclusions.</text>
</comment>
<comment type="sequence caution" evidence="14">
    <conflict type="erroneous initiation">
        <sequence resource="EMBL-CDS" id="CAA99732"/>
    </conflict>
    <text>Truncated N-terminus.</text>
</comment>
<name>STAG2_HUMAN</name>
<organism>
    <name type="scientific">Homo sapiens</name>
    <name type="common">Human</name>
    <dbReference type="NCBI Taxonomy" id="9606"/>
    <lineage>
        <taxon>Eukaryota</taxon>
        <taxon>Metazoa</taxon>
        <taxon>Chordata</taxon>
        <taxon>Craniata</taxon>
        <taxon>Vertebrata</taxon>
        <taxon>Euteleostomi</taxon>
        <taxon>Mammalia</taxon>
        <taxon>Eutheria</taxon>
        <taxon>Euarchontoglires</taxon>
        <taxon>Primates</taxon>
        <taxon>Haplorrhini</taxon>
        <taxon>Catarrhini</taxon>
        <taxon>Hominidae</taxon>
        <taxon>Homo</taxon>
    </lineage>
</organism>